<dbReference type="EMBL" id="AJ238374">
    <property type="protein sequence ID" value="CAB64337.1"/>
    <property type="molecule type" value="mRNA"/>
</dbReference>
<dbReference type="EMBL" id="AJ238375">
    <property type="protein sequence ID" value="CAB64373.1"/>
    <property type="molecule type" value="mRNA"/>
</dbReference>
<dbReference type="EMBL" id="AJ238379">
    <property type="protein sequence ID" value="CAB64339.1"/>
    <property type="status" value="ALT_INIT"/>
    <property type="molecule type" value="mRNA"/>
</dbReference>
<dbReference type="EMBL" id="AF161479">
    <property type="protein sequence ID" value="AAF29094.1"/>
    <property type="status" value="ALT_FRAME"/>
    <property type="molecule type" value="mRNA"/>
</dbReference>
<dbReference type="EMBL" id="AK001316">
    <property type="protein sequence ID" value="BAA91618.1"/>
    <property type="status" value="ALT_INIT"/>
    <property type="molecule type" value="mRNA"/>
</dbReference>
<dbReference type="EMBL" id="AK023310">
    <property type="protein sequence ID" value="BAB14519.1"/>
    <property type="status" value="ALT_INIT"/>
    <property type="molecule type" value="mRNA"/>
</dbReference>
<dbReference type="EMBL" id="AK023927">
    <property type="protein sequence ID" value="BAB14729.1"/>
    <property type="molecule type" value="mRNA"/>
</dbReference>
<dbReference type="EMBL" id="AK293410">
    <property type="protein sequence ID" value="BAG56917.1"/>
    <property type="molecule type" value="mRNA"/>
</dbReference>
<dbReference type="EMBL" id="AL109840">
    <property type="status" value="NOT_ANNOTATED_CDS"/>
    <property type="molecule type" value="Genomic_DNA"/>
</dbReference>
<dbReference type="EMBL" id="BC014952">
    <property type="protein sequence ID" value="AAH14952.1"/>
    <property type="molecule type" value="mRNA"/>
</dbReference>
<dbReference type="CCDS" id="CCDS13473.3">
    <molecule id="Q8IXH7-4"/>
</dbReference>
<dbReference type="RefSeq" id="NP_945327.3">
    <molecule id="Q8IXH7-4"/>
    <property type="nucleotide sequence ID" value="NM_198976.4"/>
</dbReference>
<dbReference type="PDB" id="5L3X">
    <property type="method" value="X-ray"/>
    <property type="resolution" value="2.75 A"/>
    <property type="chains" value="B=186-590"/>
</dbReference>
<dbReference type="PDB" id="6GML">
    <property type="method" value="EM"/>
    <property type="resolution" value="3.20 A"/>
    <property type="chains" value="W=10-590"/>
</dbReference>
<dbReference type="PDB" id="7PKS">
    <property type="method" value="EM"/>
    <property type="resolution" value="3.60 A"/>
    <property type="chains" value="W=1-590"/>
</dbReference>
<dbReference type="PDB" id="7YCX">
    <property type="method" value="EM"/>
    <property type="resolution" value="4.18 A"/>
    <property type="chains" value="g=1-590"/>
</dbReference>
<dbReference type="PDB" id="8JJ6">
    <property type="method" value="X-ray"/>
    <property type="resolution" value="2.72 A"/>
    <property type="chains" value="C/D=36-182"/>
</dbReference>
<dbReference type="PDB" id="8RBX">
    <property type="method" value="EM"/>
    <property type="resolution" value="4.10 A"/>
    <property type="chains" value="w=10-590"/>
</dbReference>
<dbReference type="PDB" id="8UHA">
    <property type="method" value="EM"/>
    <property type="resolution" value="3.50 A"/>
    <property type="chains" value="W=1-590"/>
</dbReference>
<dbReference type="PDB" id="8UHD">
    <property type="method" value="EM"/>
    <property type="resolution" value="2.80 A"/>
    <property type="chains" value="W=1-590"/>
</dbReference>
<dbReference type="PDB" id="8UHG">
    <property type="method" value="EM"/>
    <property type="resolution" value="2.70 A"/>
    <property type="chains" value="W=1-590"/>
</dbReference>
<dbReference type="PDB" id="8UI0">
    <property type="method" value="EM"/>
    <property type="resolution" value="2.70 A"/>
    <property type="chains" value="W=1-590"/>
</dbReference>
<dbReference type="PDB" id="8UIS">
    <property type="method" value="EM"/>
    <property type="resolution" value="3.23 A"/>
    <property type="chains" value="W=1-590"/>
</dbReference>
<dbReference type="PDB" id="8W8E">
    <property type="method" value="EM"/>
    <property type="resolution" value="3.90 A"/>
    <property type="chains" value="W=10-590"/>
</dbReference>
<dbReference type="PDB" id="9J0N">
    <property type="method" value="EM"/>
    <property type="resolution" value="3.40 A"/>
    <property type="chains" value="W=1-590"/>
</dbReference>
<dbReference type="PDB" id="9J0O">
    <property type="method" value="EM"/>
    <property type="resolution" value="3.30 A"/>
    <property type="chains" value="W=1-590"/>
</dbReference>
<dbReference type="PDB" id="9J0P">
    <property type="method" value="EM"/>
    <property type="resolution" value="3.30 A"/>
    <property type="chains" value="W=1-590"/>
</dbReference>
<dbReference type="PDBsum" id="5L3X"/>
<dbReference type="PDBsum" id="6GML"/>
<dbReference type="PDBsum" id="7PKS"/>
<dbReference type="PDBsum" id="7YCX"/>
<dbReference type="PDBsum" id="8JJ6"/>
<dbReference type="PDBsum" id="8RBX"/>
<dbReference type="PDBsum" id="8UHA"/>
<dbReference type="PDBsum" id="8UHD"/>
<dbReference type="PDBsum" id="8UHG"/>
<dbReference type="PDBsum" id="8UI0"/>
<dbReference type="PDBsum" id="8UIS"/>
<dbReference type="PDBsum" id="8W8E"/>
<dbReference type="PDBsum" id="9J0N"/>
<dbReference type="PDBsum" id="9J0O"/>
<dbReference type="PDBsum" id="9J0P"/>
<dbReference type="EMDB" id="EMD-0038"/>
<dbReference type="EMDB" id="EMD-13479"/>
<dbReference type="EMDB" id="EMD-19038"/>
<dbReference type="EMDB" id="EMD-33741"/>
<dbReference type="EMDB" id="EMD-37352"/>
<dbReference type="EMDB" id="EMD-42267"/>
<dbReference type="EMDB" id="EMD-42270"/>
<dbReference type="EMDB" id="EMD-42280"/>
<dbReference type="EMDB" id="EMD-42285"/>
<dbReference type="EMDB" id="EMD-42303"/>
<dbReference type="EMDB" id="EMD-42304"/>
<dbReference type="EMDB" id="EMD-61058"/>
<dbReference type="EMDB" id="EMD-61059"/>
<dbReference type="EMDB" id="EMD-61060"/>
<dbReference type="SMR" id="Q8IXH7"/>
<dbReference type="BioGRID" id="119572">
    <property type="interactions" value="128"/>
</dbReference>
<dbReference type="ComplexPortal" id="CPX-6267">
    <property type="entry name" value="NELF negative elongation factor complex"/>
</dbReference>
<dbReference type="CORUM" id="Q8IXH7"/>
<dbReference type="DIP" id="DIP-34061N"/>
<dbReference type="FunCoup" id="Q8IXH7">
    <property type="interactions" value="3821"/>
</dbReference>
<dbReference type="IntAct" id="Q8IXH7">
    <property type="interactions" value="62"/>
</dbReference>
<dbReference type="MINT" id="Q8IXH7"/>
<dbReference type="STRING" id="9606.ENSP00000473290"/>
<dbReference type="GlyGen" id="Q8IXH7">
    <property type="glycosylation" value="2 sites, 1 O-linked glycan (1 site)"/>
</dbReference>
<dbReference type="iPTMnet" id="Q8IXH7"/>
<dbReference type="MetOSite" id="Q8IXH7"/>
<dbReference type="PhosphoSitePlus" id="Q8IXH7"/>
<dbReference type="BioMuta" id="NELFCD"/>
<dbReference type="DMDM" id="38372376"/>
<dbReference type="jPOST" id="Q8IXH7"/>
<dbReference type="MassIVE" id="Q8IXH7"/>
<dbReference type="PaxDb" id="9606-ENSP00000473290"/>
<dbReference type="PeptideAtlas" id="Q8IXH7"/>
<dbReference type="ProteomicsDB" id="70993">
    <molecule id="Q8IXH7-1"/>
</dbReference>
<dbReference type="ProteomicsDB" id="70994">
    <molecule id="Q8IXH7-3"/>
</dbReference>
<dbReference type="ProteomicsDB" id="70995">
    <molecule id="Q8IXH7-4"/>
</dbReference>
<dbReference type="Pumba" id="Q8IXH7"/>
<dbReference type="Antibodypedia" id="29232">
    <property type="antibodies" value="182 antibodies from 29 providers"/>
</dbReference>
<dbReference type="DNASU" id="51497"/>
<dbReference type="Ensembl" id="ENST00000652272.2">
    <molecule id="Q8IXH7-4"/>
    <property type="protein sequence ID" value="ENSP00000499018.1"/>
    <property type="gene ID" value="ENSG00000101158.15"/>
</dbReference>
<dbReference type="GeneID" id="51497"/>
<dbReference type="KEGG" id="hsa:51497"/>
<dbReference type="MANE-Select" id="ENST00000652272.2">
    <molecule id="Q8IXH7-4"/>
    <property type="protein sequence ID" value="ENSP00000499018.1"/>
    <property type="RefSeq nucleotide sequence ID" value="NM_198976.4"/>
    <property type="RefSeq protein sequence ID" value="NP_945327.3"/>
</dbReference>
<dbReference type="UCSC" id="uc061ydt.1">
    <molecule id="Q8IXH7-1"/>
    <property type="organism name" value="human"/>
</dbReference>
<dbReference type="AGR" id="HGNC:15934"/>
<dbReference type="CTD" id="51497"/>
<dbReference type="DisGeNET" id="51497"/>
<dbReference type="GeneCards" id="NELFCD"/>
<dbReference type="HGNC" id="HGNC:15934">
    <property type="gene designation" value="NELFCD"/>
</dbReference>
<dbReference type="HPA" id="ENSG00000101158">
    <property type="expression patterns" value="Low tissue specificity"/>
</dbReference>
<dbReference type="MIM" id="605297">
    <property type="type" value="gene"/>
</dbReference>
<dbReference type="neXtProt" id="NX_Q8IXH7"/>
<dbReference type="OpenTargets" id="ENSG00000101158"/>
<dbReference type="PharmGKB" id="PA38055"/>
<dbReference type="VEuPathDB" id="HostDB:ENSG00000101158"/>
<dbReference type="eggNOG" id="ENOG502QPUE">
    <property type="taxonomic scope" value="Eukaryota"/>
</dbReference>
<dbReference type="GeneTree" id="ENSGT00390000001799"/>
<dbReference type="InParanoid" id="Q8IXH7"/>
<dbReference type="OrthoDB" id="511287at2759"/>
<dbReference type="PAN-GO" id="Q8IXH7">
    <property type="GO annotations" value="3 GO annotations based on evolutionary models"/>
</dbReference>
<dbReference type="PhylomeDB" id="Q8IXH7"/>
<dbReference type="TreeFam" id="TF324118"/>
<dbReference type="PathwayCommons" id="Q8IXH7"/>
<dbReference type="Reactome" id="R-HSA-112382">
    <property type="pathway name" value="Formation of RNA Pol II elongation complex"/>
</dbReference>
<dbReference type="Reactome" id="R-HSA-113418">
    <property type="pathway name" value="Formation of the Early Elongation Complex"/>
</dbReference>
<dbReference type="Reactome" id="R-HSA-167152">
    <property type="pathway name" value="Formation of HIV elongation complex in the absence of HIV Tat"/>
</dbReference>
<dbReference type="Reactome" id="R-HSA-167158">
    <property type="pathway name" value="Formation of the HIV-1 Early Elongation Complex"/>
</dbReference>
<dbReference type="Reactome" id="R-HSA-167200">
    <property type="pathway name" value="Formation of HIV-1 elongation complex containing HIV-1 Tat"/>
</dbReference>
<dbReference type="Reactome" id="R-HSA-167238">
    <property type="pathway name" value="Pausing and recovery of Tat-mediated HIV elongation"/>
</dbReference>
<dbReference type="Reactome" id="R-HSA-167242">
    <property type="pathway name" value="Abortive elongation of HIV-1 transcript in the absence of Tat"/>
</dbReference>
<dbReference type="Reactome" id="R-HSA-167243">
    <property type="pathway name" value="Tat-mediated HIV elongation arrest and recovery"/>
</dbReference>
<dbReference type="Reactome" id="R-HSA-167246">
    <property type="pathway name" value="Tat-mediated elongation of the HIV-1 transcript"/>
</dbReference>
<dbReference type="Reactome" id="R-HSA-167287">
    <property type="pathway name" value="HIV elongation arrest and recovery"/>
</dbReference>
<dbReference type="Reactome" id="R-HSA-167290">
    <property type="pathway name" value="Pausing and recovery of HIV elongation"/>
</dbReference>
<dbReference type="Reactome" id="R-HSA-674695">
    <property type="pathway name" value="RNA Polymerase II Pre-transcription Events"/>
</dbReference>
<dbReference type="Reactome" id="R-HSA-6796648">
    <property type="pathway name" value="TP53 Regulates Transcription of DNA Repair Genes"/>
</dbReference>
<dbReference type="Reactome" id="R-HSA-75955">
    <property type="pathway name" value="RNA Polymerase II Transcription Elongation"/>
</dbReference>
<dbReference type="SignaLink" id="Q8IXH7"/>
<dbReference type="SIGNOR" id="Q8IXH7"/>
<dbReference type="BioGRID-ORCS" id="51497">
    <property type="hits" value="561 hits in 1164 CRISPR screens"/>
</dbReference>
<dbReference type="CD-CODE" id="81D2A7B6">
    <property type="entry name" value="Nuclear stress body"/>
</dbReference>
<dbReference type="ChiTaRS" id="NELFCD">
    <property type="organism name" value="human"/>
</dbReference>
<dbReference type="GeneWiki" id="TH1L"/>
<dbReference type="GenomeRNAi" id="51497"/>
<dbReference type="Pharos" id="Q8IXH7">
    <property type="development level" value="Tbio"/>
</dbReference>
<dbReference type="PRO" id="PR:Q8IXH7"/>
<dbReference type="Proteomes" id="UP000005640">
    <property type="component" value="Chromosome 20"/>
</dbReference>
<dbReference type="RNAct" id="Q8IXH7">
    <property type="molecule type" value="protein"/>
</dbReference>
<dbReference type="Bgee" id="ENSG00000101158">
    <property type="expression patterns" value="Expressed in adenohypophysis and 200 other cell types or tissues"/>
</dbReference>
<dbReference type="ExpressionAtlas" id="Q8IXH7">
    <property type="expression patterns" value="baseline and differential"/>
</dbReference>
<dbReference type="GO" id="GO:0016020">
    <property type="term" value="C:membrane"/>
    <property type="evidence" value="ECO:0007005"/>
    <property type="project" value="UniProtKB"/>
</dbReference>
<dbReference type="GO" id="GO:0032021">
    <property type="term" value="C:NELF complex"/>
    <property type="evidence" value="ECO:0000314"/>
    <property type="project" value="UniProtKB"/>
</dbReference>
<dbReference type="GO" id="GO:0005654">
    <property type="term" value="C:nucleoplasm"/>
    <property type="evidence" value="ECO:0000304"/>
    <property type="project" value="Reactome"/>
</dbReference>
<dbReference type="GO" id="GO:0005634">
    <property type="term" value="C:nucleus"/>
    <property type="evidence" value="ECO:0000314"/>
    <property type="project" value="ComplexPortal"/>
</dbReference>
<dbReference type="GO" id="GO:0003723">
    <property type="term" value="F:RNA binding"/>
    <property type="evidence" value="ECO:0000318"/>
    <property type="project" value="GO_Central"/>
</dbReference>
<dbReference type="GO" id="GO:0034244">
    <property type="term" value="P:negative regulation of transcription elongation by RNA polymerase II"/>
    <property type="evidence" value="ECO:0000314"/>
    <property type="project" value="ComplexPortal"/>
</dbReference>
<dbReference type="InterPro" id="IPR006942">
    <property type="entry name" value="TH1"/>
</dbReference>
<dbReference type="PANTHER" id="PTHR12144:SF0">
    <property type="entry name" value="NEGATIVE ELONGATION FACTOR C_D"/>
    <property type="match status" value="1"/>
</dbReference>
<dbReference type="PANTHER" id="PTHR12144">
    <property type="entry name" value="NEGATIVE ELONGATION FACTOR D"/>
    <property type="match status" value="1"/>
</dbReference>
<dbReference type="Pfam" id="PF04858">
    <property type="entry name" value="TH1"/>
    <property type="match status" value="1"/>
</dbReference>
<name>NELFD_HUMAN</name>
<comment type="function">
    <text evidence="3 6">Essential component of the NELF complex, a complex that negatively regulates the elongation of transcription by RNA polymerase II (PubMed:12612062). The NELF complex, which acts via an association with the DSIF complex and causes transcriptional pausing, is counteracted by the P-TEFb kinase complex (PubMed:10199401).</text>
</comment>
<comment type="function">
    <text evidence="7">(Microbial infection) The NELF complex is involved in HIV-1 latency possibly involving recruitment of PCF11 to paused RNA polymerase II.</text>
</comment>
<comment type="subunit">
    <text evidence="1 5 6 7 8">The NELF complex is composed of NELFA, NELFB, NELFCD (isoform NELF-C or isoform NELF-D) and NELFE; NELFA and NELFCD form a stable subcomplex that binds primarily through NELFCD to the N-terminus of NELFB (PubMed:12612062, PubMed:27282391). Binds RNA which may help to stabilize the NELF complex on nucleic acid (PubMed:27282391). In vitro, the NELFA:NELFCD subcomplex binds to ssDNA and ssRNA in a sequence- and structure-dependent manner (PubMed:27282391). Interacts with ARAF (PubMed:11952167). Interacts with PCF11 (PubMed:23884411). Interacts with KAT8 (By similarity).</text>
</comment>
<comment type="interaction">
    <interactant intactId="EBI-536725">
        <id>Q8IXH7</id>
    </interactant>
    <interactant intactId="EBI-365961">
        <id>P10398</id>
        <label>ARAF</label>
    </interactant>
    <organismsDiffer>false</organismsDiffer>
    <experiments>5</experiments>
</comment>
<comment type="interaction">
    <interactant intactId="EBI-536725">
        <id>Q8IXH7</id>
    </interactant>
    <interactant intactId="EBI-948266">
        <id>O14901</id>
        <label>KLF11</label>
    </interactant>
    <organismsDiffer>false</organismsDiffer>
    <experiments>3</experiments>
</comment>
<comment type="interaction">
    <interactant intactId="EBI-536725">
        <id>Q8IXH7</id>
    </interactant>
    <interactant intactId="EBI-5461341">
        <id>Q9H3P2</id>
        <label>NELFA</label>
    </interactant>
    <organismsDiffer>false</organismsDiffer>
    <experiments>14</experiments>
</comment>
<comment type="interaction">
    <interactant intactId="EBI-536725">
        <id>Q8IXH7</id>
    </interactant>
    <interactant intactId="EBI-22734860">
        <id>Q8WX92-2</id>
        <label>NELFB</label>
    </interactant>
    <organismsDiffer>false</organismsDiffer>
    <experiments>3</experiments>
</comment>
<comment type="interaction">
    <interactant intactId="EBI-536725">
        <id>Q8IXH7</id>
    </interactant>
    <interactant intactId="EBI-2811583">
        <id>Q9BVL2</id>
        <label>NUP58</label>
    </interactant>
    <organismsDiffer>false</organismsDiffer>
    <experiments>3</experiments>
</comment>
<comment type="interaction">
    <interactant intactId="EBI-536725">
        <id>Q8IXH7</id>
    </interactant>
    <interactant intactId="EBI-5235340">
        <id>Q7Z699</id>
        <label>SPRED1</label>
    </interactant>
    <organismsDiffer>false</organismsDiffer>
    <experiments>3</experiments>
</comment>
<comment type="interaction">
    <interactant intactId="EBI-536725">
        <id>Q8IXH7</id>
    </interactant>
    <interactant intactId="EBI-17234977">
        <id>A0A1U9X8X8</id>
    </interactant>
    <organismsDiffer>false</organismsDiffer>
    <experiments>3</experiments>
</comment>
<comment type="interaction">
    <interactant intactId="EBI-6109710">
        <id>Q8IXH7-4</id>
    </interactant>
    <interactant intactId="EBI-5461341">
        <id>Q9H3P2</id>
        <label>NELFA</label>
    </interactant>
    <organismsDiffer>false</organismsDiffer>
    <experiments>5</experiments>
</comment>
<comment type="subcellular location">
    <subcellularLocation>
        <location evidence="10">Nucleus</location>
    </subcellularLocation>
</comment>
<comment type="alternative products">
    <event type="alternative splicing"/>
    <event type="alternative initiation"/>
    <isoform>
        <id>Q8IXH7-1</id>
        <name>NELF-C</name>
        <sequence type="displayed"/>
    </isoform>
    <isoform>
        <id>Q8IXH7-3</id>
        <name>3</name>
        <sequence type="described" ref="VSP_008950 VSP_008951"/>
    </isoform>
    <isoform>
        <id>Q8IXH7-4</id>
        <name>NELF-D</name>
        <sequence type="described" ref="VSP_018769"/>
    </isoform>
</comment>
<comment type="tissue specificity">
    <text evidence="4 6">Widely expressed. Expressed in heart, brain, lung, placenta, liver, skeletal and cardiac muscle, adrenal, thyroid, kidney and pancreas.</text>
</comment>
<comment type="miscellaneous">
    <molecule>Isoform NELF-D</molecule>
    <text evidence="10">Produced by alternative initiation at Met-10 of isoform NELF-C.</text>
</comment>
<comment type="similarity">
    <text evidence="10">Belongs to the NELF-D family.</text>
</comment>
<comment type="sequence caution" evidence="10">
    <conflict type="frameshift">
        <sequence resource="EMBL-CDS" id="AAF29094"/>
    </conflict>
</comment>
<comment type="sequence caution" evidence="10">
    <conflict type="erroneous initiation">
        <sequence resource="EMBL-CDS" id="BAA91618"/>
    </conflict>
</comment>
<comment type="sequence caution" evidence="10">
    <conflict type="erroneous initiation">
        <sequence resource="EMBL-CDS" id="BAB14519"/>
    </conflict>
</comment>
<comment type="sequence caution" evidence="10">
    <conflict type="erroneous initiation">
        <sequence resource="EMBL-CDS" id="CAB64339"/>
    </conflict>
</comment>
<proteinExistence type="evidence at protein level"/>
<accession>Q8IXH7</accession>
<accession>B4DE06</accession>
<accession>Q9BYL2</accession>
<accession>Q9H405</accession>
<accession>Q9H888</accession>
<accession>Q9H8T3</accession>
<accession>Q9NVX5</accession>
<accession>Q9P029</accession>
<accession>Q9UGN1</accession>
<accession>Q9UGN2</accession>
<accession>Q9UGN3</accession>
<keyword id="KW-0002">3D-structure</keyword>
<keyword id="KW-0024">Alternative initiation</keyword>
<keyword id="KW-0025">Alternative splicing</keyword>
<keyword id="KW-0903">Direct protein sequencing</keyword>
<keyword id="KW-0539">Nucleus</keyword>
<keyword id="KW-1267">Proteomics identification</keyword>
<keyword id="KW-1185">Reference proteome</keyword>
<keyword id="KW-0678">Repressor</keyword>
<keyword id="KW-0694">RNA-binding</keyword>
<keyword id="KW-0804">Transcription</keyword>
<keyword id="KW-0805">Transcription regulation</keyword>
<feature type="chain" id="PRO_0000019456" description="Negative elongation factor C/D">
    <location>
        <begin position="1"/>
        <end position="590"/>
    </location>
</feature>
<feature type="region of interest" description="Disordered" evidence="2">
    <location>
        <begin position="16"/>
        <end position="43"/>
    </location>
</feature>
<feature type="compositionally biased region" description="Acidic residues" evidence="2">
    <location>
        <begin position="21"/>
        <end position="43"/>
    </location>
</feature>
<feature type="splice variant" id="VSP_018769" description="In isoform NELF-D." evidence="10">
    <location>
        <begin position="1"/>
        <end position="9"/>
    </location>
</feature>
<feature type="splice variant" id="VSP_008950" description="In isoform 3." evidence="9">
    <original>LISDAGYQGEITSVSTACQQLEVF</original>
    <variation>VGRVLELRRKVFMNVYFWLLVCFL</variation>
    <location>
        <begin position="178"/>
        <end position="201"/>
    </location>
</feature>
<feature type="splice variant" id="VSP_008951" description="In isoform 3." evidence="9">
    <location>
        <begin position="202"/>
        <end position="590"/>
    </location>
</feature>
<feature type="mutagenesis site" description="Reduces RNA binding; when associated with M-315, M-371, M-372, M-374, M-384, M-388, Q-419 and Q-506." evidence="8">
    <original>R</original>
    <variation>Q</variation>
    <location>
        <position position="291"/>
    </location>
</feature>
<feature type="mutagenesis site" description="Reduces RNA binding; when associated with Q-291, M-371, M-372, M-374, M-384, M-388, Q-419 and Q-506." evidence="8">
    <original>K</original>
    <variation>M</variation>
    <location>
        <position position="315"/>
    </location>
</feature>
<feature type="mutagenesis site" description="Reduces RNA binding; when associated with Q-291, M-315, M-372, M-374, M-384, M-388, Q-419 and Q-506." evidence="8">
    <original>K</original>
    <variation>M</variation>
    <location>
        <position position="371"/>
    </location>
</feature>
<feature type="mutagenesis site" description="Reduces RNA binding; when associated with Q-291, M-315, M-371, M-374, M-384, M-388, Q-419 and Q-506." evidence="8">
    <original>K</original>
    <variation>M</variation>
    <location>
        <position position="372"/>
    </location>
</feature>
<feature type="mutagenesis site" description="Reduces RNA binding; when associated with Q-291, M-315, M-371, M-372, M-384, M-388, Q-419 and Q-506." evidence="8">
    <original>K</original>
    <variation>M</variation>
    <location>
        <position position="374"/>
    </location>
</feature>
<feature type="mutagenesis site" description="Reduces RNA binding; when associated with Q-291, M-315, M-371, M-372, M-374, M-388, Q-419 and Q-506." evidence="8">
    <original>K</original>
    <variation>M</variation>
    <location>
        <position position="384"/>
    </location>
</feature>
<feature type="mutagenesis site" description="Reduces RNA binding; when associated with Q-291, M-315, M-371, M-372, M-374, M-384, Q-419 and Q-506." evidence="8">
    <original>K</original>
    <variation>M</variation>
    <location>
        <position position="388"/>
    </location>
</feature>
<feature type="mutagenesis site" description="Reduces RNA binding; when associated with Q-291, M-315, M-371, M-372, M-374, M-384, M-388 and Q-506." evidence="8">
    <original>R</original>
    <variation>Q</variation>
    <location>
        <position position="419"/>
    </location>
</feature>
<feature type="mutagenesis site" description="Reduces RNA binding; when associated with Q-291, M-315, M-371, M-372, M-374, M-384, M-388 and Q-419." evidence="8">
    <original>R</original>
    <variation>Q</variation>
    <location>
        <position position="506"/>
    </location>
</feature>
<feature type="sequence conflict" description="In Ref. 3; BAA91618." evidence="10" ref="3">
    <original>N</original>
    <variation>D</variation>
    <location>
        <position position="117"/>
    </location>
</feature>
<feature type="sequence conflict" description="In Ref. 3; BAB14729." evidence="10" ref="3">
    <original>N</original>
    <variation>S</variation>
    <location>
        <position position="306"/>
    </location>
</feature>
<feature type="sequence conflict" description="In Ref. 3; BAA91618." evidence="10" ref="3">
    <original>W</original>
    <variation>R</variation>
    <location>
        <position position="430"/>
    </location>
</feature>
<feature type="sequence conflict" description="In Ref. 3; BAA91618." evidence="10" ref="3">
    <original>L</original>
    <variation>P</variation>
    <location>
        <position position="497"/>
    </location>
</feature>
<feature type="sequence conflict" description="In Ref. 3; BAA91618." evidence="10" ref="3">
    <original>D</original>
    <variation>V</variation>
    <location>
        <position position="573"/>
    </location>
</feature>
<feature type="helix" evidence="14">
    <location>
        <begin position="40"/>
        <end position="52"/>
    </location>
</feature>
<feature type="strand" evidence="14">
    <location>
        <begin position="53"/>
        <end position="55"/>
    </location>
</feature>
<feature type="helix" evidence="13">
    <location>
        <begin position="56"/>
        <end position="58"/>
    </location>
</feature>
<feature type="helix" evidence="14">
    <location>
        <begin position="62"/>
        <end position="72"/>
    </location>
</feature>
<feature type="helix" evidence="14">
    <location>
        <begin position="77"/>
        <end position="85"/>
    </location>
</feature>
<feature type="helix" evidence="14">
    <location>
        <begin position="90"/>
        <end position="103"/>
    </location>
</feature>
<feature type="helix" evidence="14">
    <location>
        <begin position="108"/>
        <end position="126"/>
    </location>
</feature>
<feature type="helix" evidence="14">
    <location>
        <begin position="129"/>
        <end position="138"/>
    </location>
</feature>
<feature type="helix" evidence="14">
    <location>
        <begin position="144"/>
        <end position="149"/>
    </location>
</feature>
<feature type="helix" evidence="14">
    <location>
        <begin position="153"/>
        <end position="163"/>
    </location>
</feature>
<feature type="helix" evidence="14">
    <location>
        <begin position="170"/>
        <end position="180"/>
    </location>
</feature>
<feature type="helix" evidence="14">
    <location>
        <begin position="191"/>
        <end position="194"/>
    </location>
</feature>
<feature type="strand" evidence="14">
    <location>
        <begin position="195"/>
        <end position="197"/>
    </location>
</feature>
<feature type="helix" evidence="14">
    <location>
        <begin position="198"/>
        <end position="214"/>
    </location>
</feature>
<feature type="turn" evidence="14">
    <location>
        <begin position="215"/>
        <end position="219"/>
    </location>
</feature>
<feature type="helix" evidence="14">
    <location>
        <begin position="220"/>
        <end position="231"/>
    </location>
</feature>
<feature type="helix" evidence="14">
    <location>
        <begin position="235"/>
        <end position="249"/>
    </location>
</feature>
<feature type="turn" evidence="14">
    <location>
        <begin position="252"/>
        <end position="254"/>
    </location>
</feature>
<feature type="helix" evidence="14">
    <location>
        <begin position="255"/>
        <end position="271"/>
    </location>
</feature>
<feature type="helix" evidence="14">
    <location>
        <begin position="277"/>
        <end position="283"/>
    </location>
</feature>
<feature type="helix" evidence="14">
    <location>
        <begin position="285"/>
        <end position="288"/>
    </location>
</feature>
<feature type="helix" evidence="14">
    <location>
        <begin position="290"/>
        <end position="302"/>
    </location>
</feature>
<feature type="helix" evidence="14">
    <location>
        <begin position="307"/>
        <end position="318"/>
    </location>
</feature>
<feature type="strand" evidence="14">
    <location>
        <begin position="319"/>
        <end position="321"/>
    </location>
</feature>
<feature type="helix" evidence="14">
    <location>
        <begin position="325"/>
        <end position="328"/>
    </location>
</feature>
<feature type="helix" evidence="14">
    <location>
        <begin position="331"/>
        <end position="342"/>
    </location>
</feature>
<feature type="strand" evidence="12">
    <location>
        <begin position="343"/>
        <end position="345"/>
    </location>
</feature>
<feature type="helix" evidence="14">
    <location>
        <begin position="350"/>
        <end position="365"/>
    </location>
</feature>
<feature type="strand" evidence="14">
    <location>
        <begin position="367"/>
        <end position="373"/>
    </location>
</feature>
<feature type="strand" evidence="14">
    <location>
        <begin position="375"/>
        <end position="379"/>
    </location>
</feature>
<feature type="helix" evidence="14">
    <location>
        <begin position="384"/>
        <end position="398"/>
    </location>
</feature>
<feature type="helix" evidence="14">
    <location>
        <begin position="405"/>
        <end position="409"/>
    </location>
</feature>
<feature type="helix" evidence="14">
    <location>
        <begin position="411"/>
        <end position="417"/>
    </location>
</feature>
<feature type="helix" evidence="14">
    <location>
        <begin position="421"/>
        <end position="435"/>
    </location>
</feature>
<feature type="strand" evidence="11">
    <location>
        <begin position="437"/>
        <end position="439"/>
    </location>
</feature>
<feature type="strand" evidence="12">
    <location>
        <begin position="445"/>
        <end position="448"/>
    </location>
</feature>
<feature type="helix" evidence="14">
    <location>
        <begin position="451"/>
        <end position="461"/>
    </location>
</feature>
<feature type="helix" evidence="14">
    <location>
        <begin position="463"/>
        <end position="465"/>
    </location>
</feature>
<feature type="helix" evidence="14">
    <location>
        <begin position="466"/>
        <end position="476"/>
    </location>
</feature>
<feature type="strand" evidence="14">
    <location>
        <begin position="482"/>
        <end position="484"/>
    </location>
</feature>
<feature type="helix" evidence="14">
    <location>
        <begin position="486"/>
        <end position="505"/>
    </location>
</feature>
<feature type="helix" evidence="14">
    <location>
        <begin position="510"/>
        <end position="521"/>
    </location>
</feature>
<feature type="helix" evidence="14">
    <location>
        <begin position="527"/>
        <end position="540"/>
    </location>
</feature>
<feature type="strand" evidence="11">
    <location>
        <begin position="541"/>
        <end position="543"/>
    </location>
</feature>
<feature type="helix" evidence="14">
    <location>
        <begin position="547"/>
        <end position="557"/>
    </location>
</feature>
<feature type="strand" evidence="11">
    <location>
        <begin position="558"/>
        <end position="560"/>
    </location>
</feature>
<feature type="helix" evidence="12">
    <location>
        <begin position="563"/>
        <end position="565"/>
    </location>
</feature>
<feature type="helix" evidence="14">
    <location>
        <begin position="574"/>
        <end position="583"/>
    </location>
</feature>
<protein>
    <recommendedName>
        <fullName>Negative elongation factor C/D</fullName>
        <shortName>NELF-C/D</shortName>
    </recommendedName>
    <alternativeName>
        <fullName>TH1-like protein</fullName>
    </alternativeName>
</protein>
<sequence length="590" mass="66247">MAGAVPGAIMDEDYYGSAAEWGDEADGGQQEDDSGEGEDDAEVQQECLHKFSTRDYIMEPSIFNTLKRYFQAGGSPENVIQLLSENYTAVAQTVNLLAEWLIQTGVEPVQVQETVENHLKSLLIKHFDPRKADSIFTEEGETPAWLEQMIAHTTWRDLFYKLAEAHPDCLMLNFTVKLISDAGYQGEITSVSTACQQLEVFSRVLRTSLATILDGGEENLEKNLPEFAKMVCHGEHTYLFAQAMMSVLAQEEQGGSAVRRIAQEVQRFAQEKGHDASQITLALGTAASYPRACQALGAMLSKGALNPADITVLFKMFTSMDPPPVELIRVPAFLDLFMQSLFKPGARINQDHKHKYIHILAYAASVVETWKKNKRVSINKDELKSTSKAVETVHNLCCNENKGASELVAELSTLYQCIRFPVVAMGVLKWVDWTVSEPRYFQLQTDHTPVHLALLDEISTCHQLLHPQVLQLLVKLFETEHSQLDVMEQLELKKTLLDRMVHLLSRGYVLPVVSYIRKCLEKLDTDISLIRYFVTEVLDVIAPPYTSDFVQLFLPILENDSIAGTIKTEGEHDPVTEFIAHCKSNFIMVN</sequence>
<reference key="1">
    <citation type="journal article" date="2000" name="Hum. Genet.">
        <title>Characterization of TH1 and CTSZ, two non-imprinted genes downstream of GNAS1 in chromosome 20q13.</title>
        <authorList>
            <person name="Bonthron D.T."/>
            <person name="Hayward B.E."/>
            <person name="Moran V."/>
            <person name="Strain L."/>
        </authorList>
    </citation>
    <scope>NUCLEOTIDE SEQUENCE (ISOFORM NELF-C)</scope>
    <scope>TISSUE SPECIFICITY</scope>
</reference>
<reference key="2">
    <citation type="journal article" date="2000" name="Genome Res.">
        <title>Cloning and functional analysis of cDNAs with open reading frames for 300 previously undefined genes expressed in CD34+ hematopoietic stem/progenitor cells.</title>
        <authorList>
            <person name="Zhang Q.-H."/>
            <person name="Ye M."/>
            <person name="Wu X.-Y."/>
            <person name="Ren S.-X."/>
            <person name="Zhao M."/>
            <person name="Zhao C.-J."/>
            <person name="Fu G."/>
            <person name="Shen Y."/>
            <person name="Fan H.-Y."/>
            <person name="Lu G."/>
            <person name="Zhong M."/>
            <person name="Xu X.-R."/>
            <person name="Han Z.-G."/>
            <person name="Zhang J.-W."/>
            <person name="Tao J."/>
            <person name="Huang Q.-H."/>
            <person name="Zhou J."/>
            <person name="Hu G.-X."/>
            <person name="Gu J."/>
            <person name="Chen S.-J."/>
            <person name="Chen Z."/>
        </authorList>
    </citation>
    <scope>NUCLEOTIDE SEQUENCE [LARGE SCALE MRNA] (ISOFORM NELF-C)</scope>
    <source>
        <tissue>Umbilical cord blood</tissue>
    </source>
</reference>
<reference key="3">
    <citation type="journal article" date="2004" name="Nat. Genet.">
        <title>Complete sequencing and characterization of 21,243 full-length human cDNAs.</title>
        <authorList>
            <person name="Ota T."/>
            <person name="Suzuki Y."/>
            <person name="Nishikawa T."/>
            <person name="Otsuki T."/>
            <person name="Sugiyama T."/>
            <person name="Irie R."/>
            <person name="Wakamatsu A."/>
            <person name="Hayashi K."/>
            <person name="Sato H."/>
            <person name="Nagai K."/>
            <person name="Kimura K."/>
            <person name="Makita H."/>
            <person name="Sekine M."/>
            <person name="Obayashi M."/>
            <person name="Nishi T."/>
            <person name="Shibahara T."/>
            <person name="Tanaka T."/>
            <person name="Ishii S."/>
            <person name="Yamamoto J."/>
            <person name="Saito K."/>
            <person name="Kawai Y."/>
            <person name="Isono Y."/>
            <person name="Nakamura Y."/>
            <person name="Nagahari K."/>
            <person name="Murakami K."/>
            <person name="Yasuda T."/>
            <person name="Iwayanagi T."/>
            <person name="Wagatsuma M."/>
            <person name="Shiratori A."/>
            <person name="Sudo H."/>
            <person name="Hosoiri T."/>
            <person name="Kaku Y."/>
            <person name="Kodaira H."/>
            <person name="Kondo H."/>
            <person name="Sugawara M."/>
            <person name="Takahashi M."/>
            <person name="Kanda K."/>
            <person name="Yokoi T."/>
            <person name="Furuya T."/>
            <person name="Kikkawa E."/>
            <person name="Omura Y."/>
            <person name="Abe K."/>
            <person name="Kamihara K."/>
            <person name="Katsuta N."/>
            <person name="Sato K."/>
            <person name="Tanikawa M."/>
            <person name="Yamazaki M."/>
            <person name="Ninomiya K."/>
            <person name="Ishibashi T."/>
            <person name="Yamashita H."/>
            <person name="Murakawa K."/>
            <person name="Fujimori K."/>
            <person name="Tanai H."/>
            <person name="Kimata M."/>
            <person name="Watanabe M."/>
            <person name="Hiraoka S."/>
            <person name="Chiba Y."/>
            <person name="Ishida S."/>
            <person name="Ono Y."/>
            <person name="Takiguchi S."/>
            <person name="Watanabe S."/>
            <person name="Yosida M."/>
            <person name="Hotuta T."/>
            <person name="Kusano J."/>
            <person name="Kanehori K."/>
            <person name="Takahashi-Fujii A."/>
            <person name="Hara H."/>
            <person name="Tanase T.-O."/>
            <person name="Nomura Y."/>
            <person name="Togiya S."/>
            <person name="Komai F."/>
            <person name="Hara R."/>
            <person name="Takeuchi K."/>
            <person name="Arita M."/>
            <person name="Imose N."/>
            <person name="Musashino K."/>
            <person name="Yuuki H."/>
            <person name="Oshima A."/>
            <person name="Sasaki N."/>
            <person name="Aotsuka S."/>
            <person name="Yoshikawa Y."/>
            <person name="Matsunawa H."/>
            <person name="Ichihara T."/>
            <person name="Shiohata N."/>
            <person name="Sano S."/>
            <person name="Moriya S."/>
            <person name="Momiyama H."/>
            <person name="Satoh N."/>
            <person name="Takami S."/>
            <person name="Terashima Y."/>
            <person name="Suzuki O."/>
            <person name="Nakagawa S."/>
            <person name="Senoh A."/>
            <person name="Mizoguchi H."/>
            <person name="Goto Y."/>
            <person name="Shimizu F."/>
            <person name="Wakebe H."/>
            <person name="Hishigaki H."/>
            <person name="Watanabe T."/>
            <person name="Sugiyama A."/>
            <person name="Takemoto M."/>
            <person name="Kawakami B."/>
            <person name="Yamazaki M."/>
            <person name="Watanabe K."/>
            <person name="Kumagai A."/>
            <person name="Itakura S."/>
            <person name="Fukuzumi Y."/>
            <person name="Fujimori Y."/>
            <person name="Komiyama M."/>
            <person name="Tashiro H."/>
            <person name="Tanigami A."/>
            <person name="Fujiwara T."/>
            <person name="Ono T."/>
            <person name="Yamada K."/>
            <person name="Fujii Y."/>
            <person name="Ozaki K."/>
            <person name="Hirao M."/>
            <person name="Ohmori Y."/>
            <person name="Kawabata A."/>
            <person name="Hikiji T."/>
            <person name="Kobatake N."/>
            <person name="Inagaki H."/>
            <person name="Ikema Y."/>
            <person name="Okamoto S."/>
            <person name="Okitani R."/>
            <person name="Kawakami T."/>
            <person name="Noguchi S."/>
            <person name="Itoh T."/>
            <person name="Shigeta K."/>
            <person name="Senba T."/>
            <person name="Matsumura K."/>
            <person name="Nakajima Y."/>
            <person name="Mizuno T."/>
            <person name="Morinaga M."/>
            <person name="Sasaki M."/>
            <person name="Togashi T."/>
            <person name="Oyama M."/>
            <person name="Hata H."/>
            <person name="Watanabe M."/>
            <person name="Komatsu T."/>
            <person name="Mizushima-Sugano J."/>
            <person name="Satoh T."/>
            <person name="Shirai Y."/>
            <person name="Takahashi Y."/>
            <person name="Nakagawa K."/>
            <person name="Okumura K."/>
            <person name="Nagase T."/>
            <person name="Nomura N."/>
            <person name="Kikuchi H."/>
            <person name="Masuho Y."/>
            <person name="Yamashita R."/>
            <person name="Nakai K."/>
            <person name="Yada T."/>
            <person name="Nakamura Y."/>
            <person name="Ohara O."/>
            <person name="Isogai T."/>
            <person name="Sugano S."/>
        </authorList>
    </citation>
    <scope>NUCLEOTIDE SEQUENCE [LARGE SCALE MRNA] (ISOFORMS NELF-C AND 3)</scope>
    <source>
        <tissue>Ovarian carcinoma</tissue>
        <tissue>Teratocarcinoma</tissue>
        <tissue>Thyroid</tissue>
    </source>
</reference>
<reference key="4">
    <citation type="journal article" date="2001" name="Nature">
        <title>The DNA sequence and comparative analysis of human chromosome 20.</title>
        <authorList>
            <person name="Deloukas P."/>
            <person name="Matthews L.H."/>
            <person name="Ashurst J.L."/>
            <person name="Burton J."/>
            <person name="Gilbert J.G.R."/>
            <person name="Jones M."/>
            <person name="Stavrides G."/>
            <person name="Almeida J.P."/>
            <person name="Babbage A.K."/>
            <person name="Bagguley C.L."/>
            <person name="Bailey J."/>
            <person name="Barlow K.F."/>
            <person name="Bates K.N."/>
            <person name="Beard L.M."/>
            <person name="Beare D.M."/>
            <person name="Beasley O.P."/>
            <person name="Bird C.P."/>
            <person name="Blakey S.E."/>
            <person name="Bridgeman A.M."/>
            <person name="Brown A.J."/>
            <person name="Buck D."/>
            <person name="Burrill W.D."/>
            <person name="Butler A.P."/>
            <person name="Carder C."/>
            <person name="Carter N.P."/>
            <person name="Chapman J.C."/>
            <person name="Clamp M."/>
            <person name="Clark G."/>
            <person name="Clark L.N."/>
            <person name="Clark S.Y."/>
            <person name="Clee C.M."/>
            <person name="Clegg S."/>
            <person name="Cobley V.E."/>
            <person name="Collier R.E."/>
            <person name="Connor R.E."/>
            <person name="Corby N.R."/>
            <person name="Coulson A."/>
            <person name="Coville G.J."/>
            <person name="Deadman R."/>
            <person name="Dhami P.D."/>
            <person name="Dunn M."/>
            <person name="Ellington A.G."/>
            <person name="Frankland J.A."/>
            <person name="Fraser A."/>
            <person name="French L."/>
            <person name="Garner P."/>
            <person name="Grafham D.V."/>
            <person name="Griffiths C."/>
            <person name="Griffiths M.N.D."/>
            <person name="Gwilliam R."/>
            <person name="Hall R.E."/>
            <person name="Hammond S."/>
            <person name="Harley J.L."/>
            <person name="Heath P.D."/>
            <person name="Ho S."/>
            <person name="Holden J.L."/>
            <person name="Howden P.J."/>
            <person name="Huckle E."/>
            <person name="Hunt A.R."/>
            <person name="Hunt S.E."/>
            <person name="Jekosch K."/>
            <person name="Johnson C.M."/>
            <person name="Johnson D."/>
            <person name="Kay M.P."/>
            <person name="Kimberley A.M."/>
            <person name="King A."/>
            <person name="Knights A."/>
            <person name="Laird G.K."/>
            <person name="Lawlor S."/>
            <person name="Lehvaeslaiho M.H."/>
            <person name="Leversha M.A."/>
            <person name="Lloyd C."/>
            <person name="Lloyd D.M."/>
            <person name="Lovell J.D."/>
            <person name="Marsh V.L."/>
            <person name="Martin S.L."/>
            <person name="McConnachie L.J."/>
            <person name="McLay K."/>
            <person name="McMurray A.A."/>
            <person name="Milne S.A."/>
            <person name="Mistry D."/>
            <person name="Moore M.J.F."/>
            <person name="Mullikin J.C."/>
            <person name="Nickerson T."/>
            <person name="Oliver K."/>
            <person name="Parker A."/>
            <person name="Patel R."/>
            <person name="Pearce T.A.V."/>
            <person name="Peck A.I."/>
            <person name="Phillimore B.J.C.T."/>
            <person name="Prathalingam S.R."/>
            <person name="Plumb R.W."/>
            <person name="Ramsay H."/>
            <person name="Rice C.M."/>
            <person name="Ross M.T."/>
            <person name="Scott C.E."/>
            <person name="Sehra H.K."/>
            <person name="Shownkeen R."/>
            <person name="Sims S."/>
            <person name="Skuce C.D."/>
            <person name="Smith M.L."/>
            <person name="Soderlund C."/>
            <person name="Steward C.A."/>
            <person name="Sulston J.E."/>
            <person name="Swann R.M."/>
            <person name="Sycamore N."/>
            <person name="Taylor R."/>
            <person name="Tee L."/>
            <person name="Thomas D.W."/>
            <person name="Thorpe A."/>
            <person name="Tracey A."/>
            <person name="Tromans A.C."/>
            <person name="Vaudin M."/>
            <person name="Wall M."/>
            <person name="Wallis J.M."/>
            <person name="Whitehead S.L."/>
            <person name="Whittaker P."/>
            <person name="Willey D.L."/>
            <person name="Williams L."/>
            <person name="Williams S.A."/>
            <person name="Wilming L."/>
            <person name="Wray P.W."/>
            <person name="Hubbard T."/>
            <person name="Durbin R.M."/>
            <person name="Bentley D.R."/>
            <person name="Beck S."/>
            <person name="Rogers J."/>
        </authorList>
    </citation>
    <scope>NUCLEOTIDE SEQUENCE [LARGE SCALE GENOMIC DNA]</scope>
</reference>
<reference key="5">
    <citation type="journal article" date="2004" name="Genome Res.">
        <title>The status, quality, and expansion of the NIH full-length cDNA project: the Mammalian Gene Collection (MGC).</title>
        <authorList>
            <consortium name="The MGC Project Team"/>
        </authorList>
    </citation>
    <scope>NUCLEOTIDE SEQUENCE [LARGE SCALE MRNA] (ISOFORM NELF-C)</scope>
    <source>
        <tissue>Skin</tissue>
    </source>
</reference>
<reference key="6">
    <citation type="journal article" date="2003" name="Mol. Cell. Biol.">
        <title>Human transcription elongation factor NELF: identification of novel subunits and reconstitution of the functionally active complex.</title>
        <authorList>
            <person name="Narita T."/>
            <person name="Yamaguchi Y."/>
            <person name="Yano K."/>
            <person name="Sugimoto S."/>
            <person name="Chanarat S."/>
            <person name="Wada T."/>
            <person name="Kim D.-K."/>
            <person name="Hasegawa J."/>
            <person name="Omori M."/>
            <person name="Inukai N."/>
            <person name="Endoh M."/>
            <person name="Yamada T."/>
            <person name="Handa H."/>
        </authorList>
    </citation>
    <scope>PROTEIN SEQUENCE OF 126-139; 223-230; 303-315 AND 476-491</scope>
    <scope>IDENTIFICATION IN A NELF COMPLEX</scope>
    <scope>ALTERNATIVE INITIATION</scope>
    <scope>FUNCTION</scope>
    <scope>TISSUE SPECIFICITY</scope>
</reference>
<reference key="7">
    <citation type="journal article" date="2002" name="Mol. Cell. Biochem.">
        <title>Identification of TH1 as an interaction partner of A-Raf kinase.</title>
        <authorList>
            <person name="Yin X.L."/>
            <person name="Chen S."/>
            <person name="Gu J.X."/>
        </authorList>
    </citation>
    <scope>INTERACTION WITH ARAF</scope>
</reference>
<reference key="8">
    <citation type="journal article" date="1999" name="Cell">
        <title>NELF, a multisubunit complex containing RD, cooperates with DSIF to repress RNA polymerase II elongation.</title>
        <authorList>
            <person name="Yamaguchi Y."/>
            <person name="Takagi T."/>
            <person name="Wada T."/>
            <person name="Yano K."/>
            <person name="Furuya A."/>
            <person name="Sugimoto S."/>
            <person name="Hasegawa J."/>
            <person name="Handa H."/>
        </authorList>
    </citation>
    <scope>FUNCTION OF THE NELF COMPLEX</scope>
</reference>
<reference key="9">
    <citation type="journal article" date="2011" name="BMC Syst. Biol.">
        <title>Initial characterization of the human central proteome.</title>
        <authorList>
            <person name="Burkard T.R."/>
            <person name="Planyavsky M."/>
            <person name="Kaupe I."/>
            <person name="Breitwieser F.P."/>
            <person name="Buerckstuemmer T."/>
            <person name="Bennett K.L."/>
            <person name="Superti-Furga G."/>
            <person name="Colinge J."/>
        </authorList>
    </citation>
    <scope>IDENTIFICATION BY MASS SPECTROMETRY [LARGE SCALE ANALYSIS]</scope>
</reference>
<reference key="10">
    <citation type="journal article" date="2013" name="J. Biol. Chem.">
        <title>Negative elongation factor (NELF) coordinates RNA polymerase II pausing, premature termination, and chromatin remodeling to regulate HIV transcription.</title>
        <authorList>
            <person name="Natarajan M."/>
            <person name="Schiralli Lester G.M."/>
            <person name="Lee C."/>
            <person name="Missra A."/>
            <person name="Wasserman G.A."/>
            <person name="Steffen M."/>
            <person name="Gilmour D.S."/>
            <person name="Henderson A.J."/>
        </authorList>
    </citation>
    <scope>FUNCTION OF THE NELF COMPLEX IN HIV-1 LATENCY (MICROBIAL INFECTION)</scope>
    <scope>INTERACTION WITH PCF11</scope>
</reference>
<reference key="11">
    <citation type="journal article" date="2016" name="Elife">
        <title>Architecture and RNA binding of the human negative elongation factor.</title>
        <authorList>
            <person name="Vos S.M."/>
            <person name="Pollmann D."/>
            <person name="Caizzi L."/>
            <person name="Hofmann K.B."/>
            <person name="Rombaut P."/>
            <person name="Zimniak T."/>
            <person name="Herzog F."/>
            <person name="Cramer P."/>
        </authorList>
    </citation>
    <scope>X-RAY CRYSTALLOGRAPHY (2.75 ANGSTROMS) OF 186-590 IN COMPLEX WITH NELFA</scope>
    <scope>RECONSTITUTION OF THE NELF COMPLEX</scope>
    <scope>RNA BINDING</scope>
    <scope>MUTAGENESIS OF ARG-291; LYS-315; LYS-371; LYS-372; LYS-374; LYS-384; ARG-419 AND ARG-506</scope>
</reference>
<gene>
    <name type="primary">NELFCD</name>
    <name type="synonym">NELFD</name>
    <name type="synonym">TH1</name>
    <name type="synonym">TH1L</name>
    <name type="ORF">HSPC130</name>
</gene>
<organism>
    <name type="scientific">Homo sapiens</name>
    <name type="common">Human</name>
    <dbReference type="NCBI Taxonomy" id="9606"/>
    <lineage>
        <taxon>Eukaryota</taxon>
        <taxon>Metazoa</taxon>
        <taxon>Chordata</taxon>
        <taxon>Craniata</taxon>
        <taxon>Vertebrata</taxon>
        <taxon>Euteleostomi</taxon>
        <taxon>Mammalia</taxon>
        <taxon>Eutheria</taxon>
        <taxon>Euarchontoglires</taxon>
        <taxon>Primates</taxon>
        <taxon>Haplorrhini</taxon>
        <taxon>Catarrhini</taxon>
        <taxon>Hominidae</taxon>
        <taxon>Homo</taxon>
    </lineage>
</organism>
<evidence type="ECO:0000250" key="1">
    <source>
        <dbReference type="UniProtKB" id="Q922L6"/>
    </source>
</evidence>
<evidence type="ECO:0000256" key="2">
    <source>
        <dbReference type="SAM" id="MobiDB-lite"/>
    </source>
</evidence>
<evidence type="ECO:0000269" key="3">
    <source>
    </source>
</evidence>
<evidence type="ECO:0000269" key="4">
    <source>
    </source>
</evidence>
<evidence type="ECO:0000269" key="5">
    <source>
    </source>
</evidence>
<evidence type="ECO:0000269" key="6">
    <source>
    </source>
</evidence>
<evidence type="ECO:0000269" key="7">
    <source>
    </source>
</evidence>
<evidence type="ECO:0000269" key="8">
    <source>
    </source>
</evidence>
<evidence type="ECO:0000303" key="9">
    <source>
    </source>
</evidence>
<evidence type="ECO:0000305" key="10"/>
<evidence type="ECO:0007829" key="11">
    <source>
        <dbReference type="PDB" id="5L3X"/>
    </source>
</evidence>
<evidence type="ECO:0007829" key="12">
    <source>
        <dbReference type="PDB" id="6GML"/>
    </source>
</evidence>
<evidence type="ECO:0007829" key="13">
    <source>
        <dbReference type="PDB" id="8JJ6"/>
    </source>
</evidence>
<evidence type="ECO:0007829" key="14">
    <source>
        <dbReference type="PDB" id="8UHG"/>
    </source>
</evidence>